<gene>
    <name type="primary">DEFB4</name>
    <name type="synonym">BNBD4</name>
</gene>
<reference key="1">
    <citation type="submission" date="1995-09" db="EMBL/GenBank/DDBJ databases">
        <title>Molecular cloning and expression of an antimicrobial beta-defensin from bovine neutrophils. Characterization of BNBD-4 cDNA and genomic sequences and localization of the peptide to large granules of mature neutrophils.</title>
        <authorList>
            <person name="Yount N.Y."/>
            <person name="Yuan J."/>
            <person name="Diamond G."/>
            <person name="Tarver A."/>
            <person name="McGuire P.A."/>
            <person name="McCullough C."/>
            <person name="Cullor J.S."/>
            <person name="Bevins C.L."/>
            <person name="Selsted M.E."/>
        </authorList>
    </citation>
    <scope>NUCLEOTIDE SEQUENCE [MRNA]</scope>
</reference>
<reference key="2">
    <citation type="submission" date="1996-07" db="EMBL/GenBank/DDBJ databases">
        <authorList>
            <person name="Yount N.Y."/>
            <person name="Yuan J."/>
            <person name="Tarver A.P."/>
            <person name="Diamond G."/>
            <person name="Levy J.N."/>
            <person name="McGuire P.A."/>
            <person name="McCullough C."/>
            <person name="Cullor J.S."/>
            <person name="Bevins C.L."/>
            <person name="Selsted M.E."/>
        </authorList>
    </citation>
    <scope>NUCLEOTIDE SEQUENCE</scope>
</reference>
<reference key="3">
    <citation type="submission" date="1997-07" db="EMBL/GenBank/DDBJ databases">
        <authorList>
            <person name="Yount N.Y."/>
            <person name="Yuan J."/>
            <person name="Tarver A.P."/>
            <person name="Diamond G."/>
            <person name="Levy J.N."/>
            <person name="McGuire P.A."/>
            <person name="McCullough C."/>
            <person name="Cullor J.S."/>
            <person name="Bevins C.L."/>
            <person name="Selsted M.E."/>
        </authorList>
    </citation>
    <scope>NUCLEOTIDE SEQUENCE</scope>
</reference>
<reference key="4">
    <citation type="submission" date="1997-07" db="EMBL/GenBank/DDBJ databases">
        <authorList>
            <person name="Ryan L.K."/>
            <person name="Rhodes J."/>
            <person name="Bhat M."/>
            <person name="Diamond G."/>
        </authorList>
    </citation>
    <scope>NUCLEOTIDE SEQUENCE</scope>
</reference>
<reference key="5">
    <citation type="journal article" date="1993" name="J. Biol. Chem.">
        <title>Purification, primary structures, and antibacterial activities of beta-defensins, a new family of antimicrobial peptides from bovine neutrophils.</title>
        <authorList>
            <person name="Selsted M.E."/>
            <person name="Tang Y.-Q."/>
            <person name="Morris W.L."/>
            <person name="McGuire P.A."/>
            <person name="Novotny M.J."/>
            <person name="Smith W."/>
            <person name="Henschen A.H."/>
            <person name="Cullor J.S."/>
        </authorList>
    </citation>
    <scope>PROTEIN SEQUENCE OF 23-63</scope>
    <scope>PYROGLUTAMATE FORMATION AT GLN-23</scope>
    <source>
        <strain>Hereford</strain>
        <tissue>Neutrophil</tissue>
    </source>
</reference>
<comment type="function">
    <text>Has bactericidal activity. Active against E.coli ML35 and S.aureus 502A.</text>
</comment>
<comment type="subcellular location">
    <subcellularLocation>
        <location>Secreted</location>
    </subcellularLocation>
</comment>
<comment type="tissue specificity">
    <text>Neutrophilic granules.</text>
</comment>
<comment type="similarity">
    <text evidence="3">Belongs to the beta-defensin family.</text>
</comment>
<organism>
    <name type="scientific">Bos taurus</name>
    <name type="common">Bovine</name>
    <dbReference type="NCBI Taxonomy" id="9913"/>
    <lineage>
        <taxon>Eukaryota</taxon>
        <taxon>Metazoa</taxon>
        <taxon>Chordata</taxon>
        <taxon>Craniata</taxon>
        <taxon>Vertebrata</taxon>
        <taxon>Euteleostomi</taxon>
        <taxon>Mammalia</taxon>
        <taxon>Eutheria</taxon>
        <taxon>Laurasiatheria</taxon>
        <taxon>Artiodactyla</taxon>
        <taxon>Ruminantia</taxon>
        <taxon>Pecora</taxon>
        <taxon>Bovidae</taxon>
        <taxon>Bovinae</taxon>
        <taxon>Bos</taxon>
    </lineage>
</organism>
<sequence>MRLHHLLLAVLFLVLSAGSGFTQRVRNPQSCRWNMGVCIPFLCRVGMRQIGTCFGPRVPCCRR</sequence>
<accession>P46162</accession>
<dbReference type="EMBL" id="U36200">
    <property type="protein sequence ID" value="AAD10283.1"/>
    <property type="molecule type" value="mRNA"/>
</dbReference>
<dbReference type="EMBL" id="AF008307">
    <property type="protein sequence ID" value="AAB63292.1"/>
    <property type="molecule type" value="Genomic_DNA"/>
</dbReference>
<dbReference type="EMBL" id="AF014107">
    <property type="protein sequence ID" value="AAD01522.1"/>
    <property type="molecule type" value="mRNA"/>
</dbReference>
<dbReference type="PIR" id="D45495">
    <property type="entry name" value="D45495"/>
</dbReference>
<dbReference type="RefSeq" id="NP_777200.1">
    <property type="nucleotide sequence ID" value="NM_174775.1"/>
</dbReference>
<dbReference type="SMR" id="P46162"/>
<dbReference type="FunCoup" id="P46162">
    <property type="interactions" value="27"/>
</dbReference>
<dbReference type="STRING" id="9913.ENSBTAP00000066174"/>
<dbReference type="PaxDb" id="9913-ENSBTAP00000055285"/>
<dbReference type="Ensembl" id="ENSBTAT00000082114.2">
    <property type="protein sequence ID" value="ENSBTAP00000066174.1"/>
    <property type="gene ID" value="ENSBTAG00000053557.2"/>
</dbReference>
<dbReference type="GeneID" id="286836"/>
<dbReference type="KEGG" id="bta:286836"/>
<dbReference type="CTD" id="1673"/>
<dbReference type="VEuPathDB" id="HostDB:ENSBTAG00000053557"/>
<dbReference type="GeneTree" id="ENSGT00940000160995"/>
<dbReference type="InParanoid" id="P46162"/>
<dbReference type="OrthoDB" id="9623680at2759"/>
<dbReference type="Proteomes" id="UP000009136">
    <property type="component" value="Chromosome 27"/>
</dbReference>
<dbReference type="Bgee" id="ENSBTAG00000053557">
    <property type="expression patterns" value="Expressed in pharyngeal tonsil and 76 other cell types or tissues"/>
</dbReference>
<dbReference type="GO" id="GO:0005615">
    <property type="term" value="C:extracellular space"/>
    <property type="evidence" value="ECO:0000318"/>
    <property type="project" value="GO_Central"/>
</dbReference>
<dbReference type="GO" id="GO:0031731">
    <property type="term" value="F:CCR6 chemokine receptor binding"/>
    <property type="evidence" value="ECO:0000318"/>
    <property type="project" value="GO_Central"/>
</dbReference>
<dbReference type="GO" id="GO:0042056">
    <property type="term" value="F:chemoattractant activity"/>
    <property type="evidence" value="ECO:0000318"/>
    <property type="project" value="GO_Central"/>
</dbReference>
<dbReference type="GO" id="GO:0060326">
    <property type="term" value="P:cell chemotaxis"/>
    <property type="evidence" value="ECO:0000318"/>
    <property type="project" value="GO_Central"/>
</dbReference>
<dbReference type="GO" id="GO:0042742">
    <property type="term" value="P:defense response to bacterium"/>
    <property type="evidence" value="ECO:0000318"/>
    <property type="project" value="GO_Central"/>
</dbReference>
<dbReference type="FunFam" id="3.10.360.10:FF:000001">
    <property type="entry name" value="Beta-defensin 1"/>
    <property type="match status" value="1"/>
</dbReference>
<dbReference type="Gene3D" id="3.10.360.10">
    <property type="entry name" value="Antimicrobial Peptide, Beta-defensin 2, Chain A"/>
    <property type="match status" value="1"/>
</dbReference>
<dbReference type="InterPro" id="IPR006080">
    <property type="entry name" value="Beta/alpha-defensin_C"/>
</dbReference>
<dbReference type="InterPro" id="IPR001855">
    <property type="entry name" value="Defensin_beta-like"/>
</dbReference>
<dbReference type="PANTHER" id="PTHR20515">
    <property type="entry name" value="BETA-DEFENSIN"/>
    <property type="match status" value="1"/>
</dbReference>
<dbReference type="PANTHER" id="PTHR20515:SF2">
    <property type="entry name" value="DEFENSIN BETA 4A"/>
    <property type="match status" value="1"/>
</dbReference>
<dbReference type="Pfam" id="PF00711">
    <property type="entry name" value="Defensin_beta"/>
    <property type="match status" value="1"/>
</dbReference>
<dbReference type="SMART" id="SM00048">
    <property type="entry name" value="DEFSN"/>
    <property type="match status" value="1"/>
</dbReference>
<dbReference type="SUPFAM" id="SSF57392">
    <property type="entry name" value="Defensin-like"/>
    <property type="match status" value="1"/>
</dbReference>
<feature type="signal peptide" evidence="2">
    <location>
        <begin position="1"/>
        <end position="22"/>
    </location>
</feature>
<feature type="peptide" id="PRO_0000006882" description="Beta-defensin 4">
    <location>
        <begin position="23"/>
        <end position="63"/>
    </location>
</feature>
<feature type="modified residue" description="Pyrrolidone carboxylic acid" evidence="2">
    <location>
        <position position="23"/>
    </location>
</feature>
<feature type="disulfide bond" evidence="1">
    <location>
        <begin position="31"/>
        <end position="60"/>
    </location>
</feature>
<feature type="disulfide bond" evidence="1">
    <location>
        <begin position="38"/>
        <end position="53"/>
    </location>
</feature>
<feature type="disulfide bond" evidence="1">
    <location>
        <begin position="43"/>
        <end position="61"/>
    </location>
</feature>
<protein>
    <recommendedName>
        <fullName>Beta-defensin 4</fullName>
    </recommendedName>
    <alternativeName>
        <fullName>BNBD-4</fullName>
    </alternativeName>
    <alternativeName>
        <fullName>BNDB-4</fullName>
    </alternativeName>
</protein>
<keyword id="KW-0044">Antibiotic</keyword>
<keyword id="KW-0929">Antimicrobial</keyword>
<keyword id="KW-0211">Defensin</keyword>
<keyword id="KW-0903">Direct protein sequencing</keyword>
<keyword id="KW-1015">Disulfide bond</keyword>
<keyword id="KW-0873">Pyrrolidone carboxylic acid</keyword>
<keyword id="KW-1185">Reference proteome</keyword>
<keyword id="KW-0964">Secreted</keyword>
<keyword id="KW-0732">Signal</keyword>
<evidence type="ECO:0000250" key="1"/>
<evidence type="ECO:0000269" key="2">
    <source>
    </source>
</evidence>
<evidence type="ECO:0000305" key="3"/>
<proteinExistence type="evidence at protein level"/>
<name>DEFB4_BOVIN</name>